<comment type="function">
    <text evidence="1">Involved in ubiquitination and subsequent proteasomal degradation of target proteins. Together with CUL1, RBX1 and a F-box protein, it forms a SCF E3 ubiquitin ligase complex. The functional specificity of this complex depends on the type of F-box protein. In the SCF complex, it serves as an adapter that links the F-box protein to CUL1 (By similarity).</text>
</comment>
<comment type="pathway">
    <text>Protein modification; protein ubiquitination.</text>
</comment>
<comment type="subunit">
    <text evidence="1 2 4 5 6">Part of a SCF (SKP1-cullin-F-box) protein ligase complex (By similarity). Interacts with CPR1/CPR30, EBF1, SKP2A, At3g61590, At4g38940 and At5g49610.</text>
</comment>
<comment type="subcellular location">
    <subcellularLocation>
        <location evidence="1">Nucleus</location>
    </subcellularLocation>
</comment>
<comment type="tissue specificity">
    <text evidence="3 4">Expressed in young seedlings, roots, leaves, floral stems, inflorescences, pollen, and siliques.</text>
</comment>
<comment type="developmental stage">
    <text evidence="3">Highly expressed in the pith and vascular bundle in the stem. Found in the pedicel of young buds. In siliques, mostly expressed in inner epidermis of the valve.</text>
</comment>
<comment type="similarity">
    <text evidence="7">Belongs to the SKP1 family.</text>
</comment>
<comment type="sequence caution" evidence="7">
    <conflict type="erroneous initiation">
        <sequence resource="EMBL-CDS" id="AAD32873"/>
    </conflict>
    <text>Extended N-terminus.</text>
</comment>
<comment type="sequence caution" evidence="7">
    <conflict type="erroneous initiation">
        <sequence resource="EMBL-CDS" id="AAO22641"/>
    </conflict>
    <text>Extended N-terminus.</text>
</comment>
<comment type="sequence caution" evidence="7">
    <conflict type="erroneous initiation">
        <sequence resource="EMBL-CDS" id="AAO42455"/>
    </conflict>
    <text>Extended N-terminus.</text>
</comment>
<accession>Q9SY65</accession>
<accession>F4I4A0</accession>
<accession>Q8LC82</accession>
<gene>
    <name type="primary">ASK18</name>
    <name type="ordered locus">At1g10230</name>
    <name type="ORF">F14N23.11</name>
</gene>
<keyword id="KW-0539">Nucleus</keyword>
<keyword id="KW-1185">Reference proteome</keyword>
<keyword id="KW-0833">Ubl conjugation pathway</keyword>
<organism>
    <name type="scientific">Arabidopsis thaliana</name>
    <name type="common">Mouse-ear cress</name>
    <dbReference type="NCBI Taxonomy" id="3702"/>
    <lineage>
        <taxon>Eukaryota</taxon>
        <taxon>Viridiplantae</taxon>
        <taxon>Streptophyta</taxon>
        <taxon>Embryophyta</taxon>
        <taxon>Tracheophyta</taxon>
        <taxon>Spermatophyta</taxon>
        <taxon>Magnoliopsida</taxon>
        <taxon>eudicotyledons</taxon>
        <taxon>Gunneridae</taxon>
        <taxon>Pentapetalae</taxon>
        <taxon>rosids</taxon>
        <taxon>malvids</taxon>
        <taxon>Brassicales</taxon>
        <taxon>Brassicaceae</taxon>
        <taxon>Camelineae</taxon>
        <taxon>Arabidopsis</taxon>
    </lineage>
</organism>
<protein>
    <recommendedName>
        <fullName>SKP1-like protein 18</fullName>
        <shortName>AtSK18</shortName>
    </recommendedName>
</protein>
<name>ASK18_ARATH</name>
<reference key="1">
    <citation type="journal article" date="2000" name="Nature">
        <title>Sequence and analysis of chromosome 1 of the plant Arabidopsis thaliana.</title>
        <authorList>
            <person name="Theologis A."/>
            <person name="Ecker J.R."/>
            <person name="Palm C.J."/>
            <person name="Federspiel N.A."/>
            <person name="Kaul S."/>
            <person name="White O."/>
            <person name="Alonso J."/>
            <person name="Altafi H."/>
            <person name="Araujo R."/>
            <person name="Bowman C.L."/>
            <person name="Brooks S.Y."/>
            <person name="Buehler E."/>
            <person name="Chan A."/>
            <person name="Chao Q."/>
            <person name="Chen H."/>
            <person name="Cheuk R.F."/>
            <person name="Chin C.W."/>
            <person name="Chung M.K."/>
            <person name="Conn L."/>
            <person name="Conway A.B."/>
            <person name="Conway A.R."/>
            <person name="Creasy T.H."/>
            <person name="Dewar K."/>
            <person name="Dunn P."/>
            <person name="Etgu P."/>
            <person name="Feldblyum T.V."/>
            <person name="Feng J.-D."/>
            <person name="Fong B."/>
            <person name="Fujii C.Y."/>
            <person name="Gill J.E."/>
            <person name="Goldsmith A.D."/>
            <person name="Haas B."/>
            <person name="Hansen N.F."/>
            <person name="Hughes B."/>
            <person name="Huizar L."/>
            <person name="Hunter J.L."/>
            <person name="Jenkins J."/>
            <person name="Johnson-Hopson C."/>
            <person name="Khan S."/>
            <person name="Khaykin E."/>
            <person name="Kim C.J."/>
            <person name="Koo H.L."/>
            <person name="Kremenetskaia I."/>
            <person name="Kurtz D.B."/>
            <person name="Kwan A."/>
            <person name="Lam B."/>
            <person name="Langin-Hooper S."/>
            <person name="Lee A."/>
            <person name="Lee J.M."/>
            <person name="Lenz C.A."/>
            <person name="Li J.H."/>
            <person name="Li Y.-P."/>
            <person name="Lin X."/>
            <person name="Liu S.X."/>
            <person name="Liu Z.A."/>
            <person name="Luros J.S."/>
            <person name="Maiti R."/>
            <person name="Marziali A."/>
            <person name="Militscher J."/>
            <person name="Miranda M."/>
            <person name="Nguyen M."/>
            <person name="Nierman W.C."/>
            <person name="Osborne B.I."/>
            <person name="Pai G."/>
            <person name="Peterson J."/>
            <person name="Pham P.K."/>
            <person name="Rizzo M."/>
            <person name="Rooney T."/>
            <person name="Rowley D."/>
            <person name="Sakano H."/>
            <person name="Salzberg S.L."/>
            <person name="Schwartz J.R."/>
            <person name="Shinn P."/>
            <person name="Southwick A.M."/>
            <person name="Sun H."/>
            <person name="Tallon L.J."/>
            <person name="Tambunga G."/>
            <person name="Toriumi M.J."/>
            <person name="Town C.D."/>
            <person name="Utterback T."/>
            <person name="Van Aken S."/>
            <person name="Vaysberg M."/>
            <person name="Vysotskaia V.S."/>
            <person name="Walker M."/>
            <person name="Wu D."/>
            <person name="Yu G."/>
            <person name="Fraser C.M."/>
            <person name="Venter J.C."/>
            <person name="Davis R.W."/>
        </authorList>
    </citation>
    <scope>NUCLEOTIDE SEQUENCE [LARGE SCALE GENOMIC DNA]</scope>
    <source>
        <strain>cv. Columbia</strain>
    </source>
</reference>
<reference key="2">
    <citation type="journal article" date="2017" name="Plant J.">
        <title>Araport11: a complete reannotation of the Arabidopsis thaliana reference genome.</title>
        <authorList>
            <person name="Cheng C.Y."/>
            <person name="Krishnakumar V."/>
            <person name="Chan A.P."/>
            <person name="Thibaud-Nissen F."/>
            <person name="Schobel S."/>
            <person name="Town C.D."/>
        </authorList>
    </citation>
    <scope>GENOME REANNOTATION</scope>
    <source>
        <strain>cv. Columbia</strain>
    </source>
</reference>
<reference key="3">
    <citation type="journal article" date="2003" name="Science">
        <title>Empirical analysis of transcriptional activity in the Arabidopsis genome.</title>
        <authorList>
            <person name="Yamada K."/>
            <person name="Lim J."/>
            <person name="Dale J.M."/>
            <person name="Chen H."/>
            <person name="Shinn P."/>
            <person name="Palm C.J."/>
            <person name="Southwick A.M."/>
            <person name="Wu H.C."/>
            <person name="Kim C.J."/>
            <person name="Nguyen M."/>
            <person name="Pham P.K."/>
            <person name="Cheuk R.F."/>
            <person name="Karlin-Newmann G."/>
            <person name="Liu S.X."/>
            <person name="Lam B."/>
            <person name="Sakano H."/>
            <person name="Wu T."/>
            <person name="Yu G."/>
            <person name="Miranda M."/>
            <person name="Quach H.L."/>
            <person name="Tripp M."/>
            <person name="Chang C.H."/>
            <person name="Lee J.M."/>
            <person name="Toriumi M.J."/>
            <person name="Chan M.M."/>
            <person name="Tang C.C."/>
            <person name="Onodera C.S."/>
            <person name="Deng J.M."/>
            <person name="Akiyama K."/>
            <person name="Ansari Y."/>
            <person name="Arakawa T."/>
            <person name="Banh J."/>
            <person name="Banno F."/>
            <person name="Bowser L."/>
            <person name="Brooks S.Y."/>
            <person name="Carninci P."/>
            <person name="Chao Q."/>
            <person name="Choy N."/>
            <person name="Enju A."/>
            <person name="Goldsmith A.D."/>
            <person name="Gurjal M."/>
            <person name="Hansen N.F."/>
            <person name="Hayashizaki Y."/>
            <person name="Johnson-Hopson C."/>
            <person name="Hsuan V.W."/>
            <person name="Iida K."/>
            <person name="Karnes M."/>
            <person name="Khan S."/>
            <person name="Koesema E."/>
            <person name="Ishida J."/>
            <person name="Jiang P.X."/>
            <person name="Jones T."/>
            <person name="Kawai J."/>
            <person name="Kamiya A."/>
            <person name="Meyers C."/>
            <person name="Nakajima M."/>
            <person name="Narusaka M."/>
            <person name="Seki M."/>
            <person name="Sakurai T."/>
            <person name="Satou M."/>
            <person name="Tamse R."/>
            <person name="Vaysberg M."/>
            <person name="Wallender E.K."/>
            <person name="Wong C."/>
            <person name="Yamamura Y."/>
            <person name="Yuan S."/>
            <person name="Shinozaki K."/>
            <person name="Davis R.W."/>
            <person name="Theologis A."/>
            <person name="Ecker J.R."/>
        </authorList>
    </citation>
    <scope>NUCLEOTIDE SEQUENCE [LARGE SCALE MRNA]</scope>
    <source>
        <strain>cv. Columbia</strain>
    </source>
</reference>
<reference key="4">
    <citation type="submission" date="2002-03" db="EMBL/GenBank/DDBJ databases">
        <title>Full-length cDNA from Arabidopsis thaliana.</title>
        <authorList>
            <person name="Brover V.V."/>
            <person name="Troukhan M.E."/>
            <person name="Alexandrov N.A."/>
            <person name="Lu Y.-P."/>
            <person name="Flavell R.B."/>
            <person name="Feldmann K.A."/>
        </authorList>
    </citation>
    <scope>NUCLEOTIDE SEQUENCE [LARGE SCALE MRNA]</scope>
</reference>
<reference key="5">
    <citation type="journal article" date="2002" name="Proc. Natl. Acad. Sci. U.S.A.">
        <title>The F-box subunit of the SCF E3 complex is encoded by a diverse superfamily of genes in Arabidopsis.</title>
        <authorList>
            <person name="Gagne J.M."/>
            <person name="Downes B.P."/>
            <person name="Shiu S.-H."/>
            <person name="Durski A.M."/>
            <person name="Vierstra R.D."/>
        </authorList>
    </citation>
    <scope>INTERACTION WITH EBF1 AND AT4G38940</scope>
</reference>
<reference key="6">
    <citation type="journal article" date="2003" name="Plant Physiol.">
        <title>Members of the Arabidopsis-SKP1-like gene family exhibit a variety of expression patterns and may play diverse roles in Arabidopsis.</title>
        <authorList>
            <person name="Zhao D."/>
            <person name="Ni W."/>
            <person name="Feng B."/>
            <person name="Han T."/>
            <person name="Petrasek M.G."/>
            <person name="Ma H."/>
        </authorList>
    </citation>
    <scope>GENE FAMILY</scope>
    <scope>NOMENCLATURE</scope>
    <scope>TISSUE SPECIFICITY</scope>
    <scope>DEVELOPMENTAL STAGE</scope>
</reference>
<reference key="7">
    <citation type="journal article" date="2004" name="Plant Cell Physiol.">
        <title>Expression and interaction analysis of Arabidopsis Skp1-related genes.</title>
        <authorList>
            <person name="Takahashi N."/>
            <person name="Kuroda H."/>
            <person name="Kuromori T."/>
            <person name="Hirayama T."/>
            <person name="Seki M."/>
            <person name="Shinozaki K."/>
            <person name="Shimada H."/>
            <person name="Matsui M."/>
        </authorList>
    </citation>
    <scope>TISSUE SPECIFICITY</scope>
    <scope>INTERACTION WITH AT3G61590 AND AT5G49610</scope>
</reference>
<reference key="8">
    <citation type="journal article" date="2008" name="Plant J.">
        <title>SKP2A, an F-box protein that regulates cell division, is degraded via the ubiquitin pathway.</title>
        <authorList>
            <person name="Jurado S."/>
            <person name="Diaz-Trivino S."/>
            <person name="Abraham Z."/>
            <person name="Manzano C."/>
            <person name="Gutierrez C."/>
            <person name="del Pozo C."/>
        </authorList>
    </citation>
    <scope>INTERACTION WITH SKP2A</scope>
</reference>
<reference key="9">
    <citation type="journal article" date="2009" name="Plant J.">
        <title>An F-box gene, CPR30, functions as a negative regulator of the defense response in Arabidopsis.</title>
        <authorList>
            <person name="Gou M."/>
            <person name="Su N."/>
            <person name="Zheng J."/>
            <person name="Huai J."/>
            <person name="Wu G."/>
            <person name="Zhao J."/>
            <person name="He J."/>
            <person name="Tang D."/>
            <person name="Yang S."/>
            <person name="Wang G."/>
        </authorList>
    </citation>
    <scope>INTERACTION WITH CPR1/CPR30</scope>
</reference>
<proteinExistence type="evidence at protein level"/>
<evidence type="ECO:0000250" key="1"/>
<evidence type="ECO:0000269" key="2">
    <source>
    </source>
</evidence>
<evidence type="ECO:0000269" key="3">
    <source>
    </source>
</evidence>
<evidence type="ECO:0000269" key="4">
    <source>
    </source>
</evidence>
<evidence type="ECO:0000269" key="5">
    <source>
    </source>
</evidence>
<evidence type="ECO:0000269" key="6">
    <source>
    </source>
</evidence>
<evidence type="ECO:0000305" key="7"/>
<sequence>MSSNKILLTSSDGESFEIDEAVARKFLIIVHMMEDNCAGEAIPLENVTGDILSKIIEYAKMHVNEPSEEDEDEEAKKNLDSWDAKFMEKLDLETIFKIILAANYLNFEGLLGFASQTVADYIKDKTPEEVREIFNIENDFTPEEEEEIRKENAWTFNE</sequence>
<dbReference type="EMBL" id="AC005489">
    <property type="protein sequence ID" value="AAD32873.1"/>
    <property type="status" value="ALT_INIT"/>
    <property type="molecule type" value="Genomic_DNA"/>
</dbReference>
<dbReference type="EMBL" id="CP002684">
    <property type="protein sequence ID" value="AEE28557.2"/>
    <property type="molecule type" value="Genomic_DNA"/>
</dbReference>
<dbReference type="EMBL" id="BT002822">
    <property type="protein sequence ID" value="AAO22641.1"/>
    <property type="status" value="ALT_INIT"/>
    <property type="molecule type" value="mRNA"/>
</dbReference>
<dbReference type="EMBL" id="BT004461">
    <property type="protein sequence ID" value="AAO42455.1"/>
    <property type="status" value="ALT_INIT"/>
    <property type="molecule type" value="mRNA"/>
</dbReference>
<dbReference type="EMBL" id="AY086743">
    <property type="protein sequence ID" value="AAM63794.1"/>
    <property type="molecule type" value="mRNA"/>
</dbReference>
<dbReference type="PIR" id="G86236">
    <property type="entry name" value="G86236"/>
</dbReference>
<dbReference type="RefSeq" id="NP_563864.2">
    <property type="nucleotide sequence ID" value="NM_100897.3"/>
</dbReference>
<dbReference type="SMR" id="Q9SY65"/>
<dbReference type="BioGRID" id="22802">
    <property type="interactions" value="46"/>
</dbReference>
<dbReference type="ComplexPortal" id="CPX-1445">
    <property type="entry name" value="SCF(COI1) ubiquitin ligase complex, variant CUL1-RBX1A-ASK18"/>
</dbReference>
<dbReference type="ComplexPortal" id="CPX-1466">
    <property type="entry name" value="SCF(COI1) ubiquitin ligase complex, variant CUL1-RBX1B-ASK18"/>
</dbReference>
<dbReference type="ComplexPortal" id="CPX-1488">
    <property type="entry name" value="SCF(COI1) ubiquitin ligase complex, variant CUL2-RBX1A-ASK18"/>
</dbReference>
<dbReference type="ComplexPortal" id="CPX-1511">
    <property type="entry name" value="SCF(COI1) ubiquitin ligase complex, variant CUL2-RBX1B-ASK18"/>
</dbReference>
<dbReference type="ComplexPortal" id="CPX-1531">
    <property type="entry name" value="SCF(TIR1) ubiquitin ligase complex, variant CUL1-RBX1A-ASK18"/>
</dbReference>
<dbReference type="ComplexPortal" id="CPX-1552">
    <property type="entry name" value="SCF(TIR1) ubiquitin ligase complex, variant CUL1-RBX1B-ASK18"/>
</dbReference>
<dbReference type="ComplexPortal" id="CPX-1574">
    <property type="entry name" value="SCF(TIR1) ubiquitin ligase complex, variant CUL2-RBX1A-ASK18"/>
</dbReference>
<dbReference type="ComplexPortal" id="CPX-1595">
    <property type="entry name" value="SCF(TIR1) ubiquitin ligase complex, variant CUL2-RBX1B-ASK18"/>
</dbReference>
<dbReference type="FunCoup" id="Q9SY65">
    <property type="interactions" value="551"/>
</dbReference>
<dbReference type="IntAct" id="Q9SY65">
    <property type="interactions" value="12"/>
</dbReference>
<dbReference type="STRING" id="3702.Q9SY65"/>
<dbReference type="iPTMnet" id="Q9SY65"/>
<dbReference type="PaxDb" id="3702-AT1G10230.1"/>
<dbReference type="ProteomicsDB" id="246686"/>
<dbReference type="EnsemblPlants" id="AT1G10230.1">
    <property type="protein sequence ID" value="AT1G10230.1"/>
    <property type="gene ID" value="AT1G10230"/>
</dbReference>
<dbReference type="GeneID" id="837562"/>
<dbReference type="Gramene" id="AT1G10230.1">
    <property type="protein sequence ID" value="AT1G10230.1"/>
    <property type="gene ID" value="AT1G10230"/>
</dbReference>
<dbReference type="KEGG" id="ath:AT1G10230"/>
<dbReference type="Araport" id="AT1G10230"/>
<dbReference type="TAIR" id="AT1G10230">
    <property type="gene designation" value="SK18"/>
</dbReference>
<dbReference type="eggNOG" id="KOG1724">
    <property type="taxonomic scope" value="Eukaryota"/>
</dbReference>
<dbReference type="HOGENOM" id="CLU_059252_5_0_1"/>
<dbReference type="InParanoid" id="Q9SY65"/>
<dbReference type="OMA" id="MEDNCAG"/>
<dbReference type="PhylomeDB" id="Q9SY65"/>
<dbReference type="UniPathway" id="UPA00143"/>
<dbReference type="PRO" id="PR:Q9SY65"/>
<dbReference type="Proteomes" id="UP000006548">
    <property type="component" value="Chromosome 1"/>
</dbReference>
<dbReference type="ExpressionAtlas" id="Q9SY65">
    <property type="expression patterns" value="baseline and differential"/>
</dbReference>
<dbReference type="GO" id="GO:0005634">
    <property type="term" value="C:nucleus"/>
    <property type="evidence" value="ECO:0007669"/>
    <property type="project" value="UniProtKB-SubCell"/>
</dbReference>
<dbReference type="GO" id="GO:0019005">
    <property type="term" value="C:SCF ubiquitin ligase complex"/>
    <property type="evidence" value="ECO:0000250"/>
    <property type="project" value="ComplexPortal"/>
</dbReference>
<dbReference type="GO" id="GO:0009734">
    <property type="term" value="P:auxin-activated signaling pathway"/>
    <property type="evidence" value="ECO:0000303"/>
    <property type="project" value="ComplexPortal"/>
</dbReference>
<dbReference type="GO" id="GO:0009867">
    <property type="term" value="P:jasmonic acid mediated signaling pathway"/>
    <property type="evidence" value="ECO:0000315"/>
    <property type="project" value="ComplexPortal"/>
</dbReference>
<dbReference type="GO" id="GO:0016567">
    <property type="term" value="P:protein ubiquitination"/>
    <property type="evidence" value="ECO:0007669"/>
    <property type="project" value="UniProtKB-UniPathway"/>
</dbReference>
<dbReference type="GO" id="GO:0009733">
    <property type="term" value="P:response to auxin"/>
    <property type="evidence" value="ECO:0000303"/>
    <property type="project" value="ComplexPortal"/>
</dbReference>
<dbReference type="GO" id="GO:0009753">
    <property type="term" value="P:response to jasmonic acid"/>
    <property type="evidence" value="ECO:0000315"/>
    <property type="project" value="ComplexPortal"/>
</dbReference>
<dbReference type="GO" id="GO:0006511">
    <property type="term" value="P:ubiquitin-dependent protein catabolic process"/>
    <property type="evidence" value="ECO:0007669"/>
    <property type="project" value="InterPro"/>
</dbReference>
<dbReference type="CDD" id="cd18322">
    <property type="entry name" value="BTB_POZ_SKP1"/>
    <property type="match status" value="1"/>
</dbReference>
<dbReference type="FunFam" id="3.30.710.10:FF:000026">
    <property type="entry name" value="E3 ubiquitin ligase complex SCF subunit"/>
    <property type="match status" value="1"/>
</dbReference>
<dbReference type="Gene3D" id="3.30.710.10">
    <property type="entry name" value="Potassium Channel Kv1.1, Chain A"/>
    <property type="match status" value="1"/>
</dbReference>
<dbReference type="InterPro" id="IPR016897">
    <property type="entry name" value="SKP1"/>
</dbReference>
<dbReference type="InterPro" id="IPR001232">
    <property type="entry name" value="SKP1-like"/>
</dbReference>
<dbReference type="InterPro" id="IPR036296">
    <property type="entry name" value="SKP1-like_dim_sf"/>
</dbReference>
<dbReference type="InterPro" id="IPR011333">
    <property type="entry name" value="SKP1/BTB/POZ_sf"/>
</dbReference>
<dbReference type="InterPro" id="IPR016072">
    <property type="entry name" value="Skp1_comp_dimer"/>
</dbReference>
<dbReference type="InterPro" id="IPR016073">
    <property type="entry name" value="Skp1_comp_POZ"/>
</dbReference>
<dbReference type="PANTHER" id="PTHR11165">
    <property type="entry name" value="SKP1"/>
    <property type="match status" value="1"/>
</dbReference>
<dbReference type="Pfam" id="PF01466">
    <property type="entry name" value="Skp1"/>
    <property type="match status" value="1"/>
</dbReference>
<dbReference type="Pfam" id="PF03931">
    <property type="entry name" value="Skp1_POZ"/>
    <property type="match status" value="1"/>
</dbReference>
<dbReference type="PIRSF" id="PIRSF028729">
    <property type="entry name" value="E3_ubiquit_lig_SCF_Skp"/>
    <property type="match status" value="1"/>
</dbReference>
<dbReference type="SMART" id="SM00512">
    <property type="entry name" value="Skp1"/>
    <property type="match status" value="1"/>
</dbReference>
<dbReference type="SUPFAM" id="SSF54695">
    <property type="entry name" value="POZ domain"/>
    <property type="match status" value="1"/>
</dbReference>
<dbReference type="SUPFAM" id="SSF81382">
    <property type="entry name" value="Skp1 dimerisation domain-like"/>
    <property type="match status" value="1"/>
</dbReference>
<feature type="chain" id="PRO_0000375259" description="SKP1-like protein 18">
    <location>
        <begin position="1"/>
        <end position="158"/>
    </location>
</feature>
<feature type="region of interest" description="Interaction with the F-box domain of F-box proteins" evidence="1">
    <location>
        <begin position="99"/>
        <end position="157"/>
    </location>
</feature>
<feature type="sequence conflict" description="In Ref. 4; AAM63794." evidence="7" ref="4">
    <original>N</original>
    <variation>S</variation>
    <location>
        <position position="152"/>
    </location>
</feature>